<evidence type="ECO:0000255" key="1">
    <source>
        <dbReference type="HAMAP-Rule" id="MF_01576"/>
    </source>
</evidence>
<protein>
    <recommendedName>
        <fullName evidence="1">Bifunctional protein FolD</fullName>
    </recommendedName>
    <domain>
        <recommendedName>
            <fullName evidence="1">Methylenetetrahydrofolate dehydrogenase</fullName>
            <ecNumber evidence="1">1.5.1.5</ecNumber>
        </recommendedName>
    </domain>
    <domain>
        <recommendedName>
            <fullName evidence="1">Methenyltetrahydrofolate cyclohydrolase</fullName>
            <ecNumber evidence="1">3.5.4.9</ecNumber>
        </recommendedName>
    </domain>
</protein>
<keyword id="KW-0028">Amino-acid biosynthesis</keyword>
<keyword id="KW-0368">Histidine biosynthesis</keyword>
<keyword id="KW-0378">Hydrolase</keyword>
<keyword id="KW-0486">Methionine biosynthesis</keyword>
<keyword id="KW-0511">Multifunctional enzyme</keyword>
<keyword id="KW-0521">NADP</keyword>
<keyword id="KW-0554">One-carbon metabolism</keyword>
<keyword id="KW-0560">Oxidoreductase</keyword>
<keyword id="KW-0658">Purine biosynthesis</keyword>
<proteinExistence type="inferred from homology"/>
<reference key="1">
    <citation type="journal article" date="2007" name="Genome Biol.">
        <title>Characterization and modeling of the Haemophilus influenzae core and supragenomes based on the complete genomic sequences of Rd and 12 clinical nontypeable strains.</title>
        <authorList>
            <person name="Hogg J.S."/>
            <person name="Hu F.Z."/>
            <person name="Janto B."/>
            <person name="Boissy R."/>
            <person name="Hayes J."/>
            <person name="Keefe R."/>
            <person name="Post J.C."/>
            <person name="Ehrlich G.D."/>
        </authorList>
    </citation>
    <scope>NUCLEOTIDE SEQUENCE [LARGE SCALE GENOMIC DNA]</scope>
    <source>
        <strain>PittGG</strain>
    </source>
</reference>
<comment type="function">
    <text evidence="1">Catalyzes the oxidation of 5,10-methylenetetrahydrofolate to 5,10-methenyltetrahydrofolate and then the hydrolysis of 5,10-methenyltetrahydrofolate to 10-formyltetrahydrofolate.</text>
</comment>
<comment type="catalytic activity">
    <reaction evidence="1">
        <text>(6R)-5,10-methylene-5,6,7,8-tetrahydrofolate + NADP(+) = (6R)-5,10-methenyltetrahydrofolate + NADPH</text>
        <dbReference type="Rhea" id="RHEA:22812"/>
        <dbReference type="ChEBI" id="CHEBI:15636"/>
        <dbReference type="ChEBI" id="CHEBI:57455"/>
        <dbReference type="ChEBI" id="CHEBI:57783"/>
        <dbReference type="ChEBI" id="CHEBI:58349"/>
        <dbReference type="EC" id="1.5.1.5"/>
    </reaction>
</comment>
<comment type="catalytic activity">
    <reaction evidence="1">
        <text>(6R)-5,10-methenyltetrahydrofolate + H2O = (6R)-10-formyltetrahydrofolate + H(+)</text>
        <dbReference type="Rhea" id="RHEA:23700"/>
        <dbReference type="ChEBI" id="CHEBI:15377"/>
        <dbReference type="ChEBI" id="CHEBI:15378"/>
        <dbReference type="ChEBI" id="CHEBI:57455"/>
        <dbReference type="ChEBI" id="CHEBI:195366"/>
        <dbReference type="EC" id="3.5.4.9"/>
    </reaction>
</comment>
<comment type="pathway">
    <text evidence="1">One-carbon metabolism; tetrahydrofolate interconversion.</text>
</comment>
<comment type="subunit">
    <text evidence="1">Homodimer.</text>
</comment>
<comment type="similarity">
    <text evidence="1">Belongs to the tetrahydrofolate dehydrogenase/cyclohydrolase family.</text>
</comment>
<feature type="chain" id="PRO_0000305823" description="Bifunctional protein FolD">
    <location>
        <begin position="1"/>
        <end position="282"/>
    </location>
</feature>
<feature type="binding site" evidence="1">
    <location>
        <begin position="166"/>
        <end position="168"/>
    </location>
    <ligand>
        <name>NADP(+)</name>
        <dbReference type="ChEBI" id="CHEBI:58349"/>
    </ligand>
</feature>
<feature type="binding site" evidence="1">
    <location>
        <position position="232"/>
    </location>
    <ligand>
        <name>NADP(+)</name>
        <dbReference type="ChEBI" id="CHEBI:58349"/>
    </ligand>
</feature>
<dbReference type="EC" id="1.5.1.5" evidence="1"/>
<dbReference type="EC" id="3.5.4.9" evidence="1"/>
<dbReference type="EMBL" id="CP000672">
    <property type="protein sequence ID" value="ABR00270.1"/>
    <property type="molecule type" value="Genomic_DNA"/>
</dbReference>
<dbReference type="SMR" id="A5UHL4"/>
<dbReference type="KEGG" id="hiq:CGSHiGG_06985"/>
<dbReference type="HOGENOM" id="CLU_034045_2_1_6"/>
<dbReference type="UniPathway" id="UPA00193"/>
<dbReference type="Proteomes" id="UP000001990">
    <property type="component" value="Chromosome"/>
</dbReference>
<dbReference type="GO" id="GO:0005829">
    <property type="term" value="C:cytosol"/>
    <property type="evidence" value="ECO:0007669"/>
    <property type="project" value="TreeGrafter"/>
</dbReference>
<dbReference type="GO" id="GO:0004477">
    <property type="term" value="F:methenyltetrahydrofolate cyclohydrolase activity"/>
    <property type="evidence" value="ECO:0007669"/>
    <property type="project" value="UniProtKB-UniRule"/>
</dbReference>
<dbReference type="GO" id="GO:0004488">
    <property type="term" value="F:methylenetetrahydrofolate dehydrogenase (NADP+) activity"/>
    <property type="evidence" value="ECO:0007669"/>
    <property type="project" value="UniProtKB-UniRule"/>
</dbReference>
<dbReference type="GO" id="GO:0000105">
    <property type="term" value="P:L-histidine biosynthetic process"/>
    <property type="evidence" value="ECO:0007669"/>
    <property type="project" value="UniProtKB-KW"/>
</dbReference>
<dbReference type="GO" id="GO:0009086">
    <property type="term" value="P:methionine biosynthetic process"/>
    <property type="evidence" value="ECO:0007669"/>
    <property type="project" value="UniProtKB-KW"/>
</dbReference>
<dbReference type="GO" id="GO:0006164">
    <property type="term" value="P:purine nucleotide biosynthetic process"/>
    <property type="evidence" value="ECO:0007669"/>
    <property type="project" value="UniProtKB-KW"/>
</dbReference>
<dbReference type="GO" id="GO:0035999">
    <property type="term" value="P:tetrahydrofolate interconversion"/>
    <property type="evidence" value="ECO:0007669"/>
    <property type="project" value="UniProtKB-UniRule"/>
</dbReference>
<dbReference type="CDD" id="cd01080">
    <property type="entry name" value="NAD_bind_m-THF_DH_Cyclohyd"/>
    <property type="match status" value="1"/>
</dbReference>
<dbReference type="FunFam" id="3.40.50.10860:FF:000001">
    <property type="entry name" value="Bifunctional protein FolD"/>
    <property type="match status" value="1"/>
</dbReference>
<dbReference type="FunFam" id="3.40.50.720:FF:000006">
    <property type="entry name" value="Bifunctional protein FolD"/>
    <property type="match status" value="1"/>
</dbReference>
<dbReference type="Gene3D" id="3.40.50.10860">
    <property type="entry name" value="Leucine Dehydrogenase, chain A, domain 1"/>
    <property type="match status" value="1"/>
</dbReference>
<dbReference type="Gene3D" id="3.40.50.720">
    <property type="entry name" value="NAD(P)-binding Rossmann-like Domain"/>
    <property type="match status" value="1"/>
</dbReference>
<dbReference type="HAMAP" id="MF_01576">
    <property type="entry name" value="THF_DHG_CYH"/>
    <property type="match status" value="1"/>
</dbReference>
<dbReference type="InterPro" id="IPR046346">
    <property type="entry name" value="Aminoacid_DH-like_N_sf"/>
</dbReference>
<dbReference type="InterPro" id="IPR036291">
    <property type="entry name" value="NAD(P)-bd_dom_sf"/>
</dbReference>
<dbReference type="InterPro" id="IPR000672">
    <property type="entry name" value="THF_DH/CycHdrlase"/>
</dbReference>
<dbReference type="InterPro" id="IPR020630">
    <property type="entry name" value="THF_DH/CycHdrlase_cat_dom"/>
</dbReference>
<dbReference type="InterPro" id="IPR020867">
    <property type="entry name" value="THF_DH/CycHdrlase_CS"/>
</dbReference>
<dbReference type="InterPro" id="IPR020631">
    <property type="entry name" value="THF_DH/CycHdrlase_NAD-bd_dom"/>
</dbReference>
<dbReference type="NCBIfam" id="NF008058">
    <property type="entry name" value="PRK10792.1"/>
    <property type="match status" value="1"/>
</dbReference>
<dbReference type="NCBIfam" id="NF010783">
    <property type="entry name" value="PRK14186.1"/>
    <property type="match status" value="1"/>
</dbReference>
<dbReference type="PANTHER" id="PTHR48099:SF5">
    <property type="entry name" value="C-1-TETRAHYDROFOLATE SYNTHASE, CYTOPLASMIC"/>
    <property type="match status" value="1"/>
</dbReference>
<dbReference type="PANTHER" id="PTHR48099">
    <property type="entry name" value="C-1-TETRAHYDROFOLATE SYNTHASE, CYTOPLASMIC-RELATED"/>
    <property type="match status" value="1"/>
</dbReference>
<dbReference type="Pfam" id="PF00763">
    <property type="entry name" value="THF_DHG_CYH"/>
    <property type="match status" value="1"/>
</dbReference>
<dbReference type="Pfam" id="PF02882">
    <property type="entry name" value="THF_DHG_CYH_C"/>
    <property type="match status" value="1"/>
</dbReference>
<dbReference type="PRINTS" id="PR00085">
    <property type="entry name" value="THFDHDRGNASE"/>
</dbReference>
<dbReference type="SUPFAM" id="SSF53223">
    <property type="entry name" value="Aminoacid dehydrogenase-like, N-terminal domain"/>
    <property type="match status" value="1"/>
</dbReference>
<dbReference type="SUPFAM" id="SSF51735">
    <property type="entry name" value="NAD(P)-binding Rossmann-fold domains"/>
    <property type="match status" value="1"/>
</dbReference>
<dbReference type="PROSITE" id="PS00766">
    <property type="entry name" value="THF_DHG_CYH_1"/>
    <property type="match status" value="1"/>
</dbReference>
<dbReference type="PROSITE" id="PS00767">
    <property type="entry name" value="THF_DHG_CYH_2"/>
    <property type="match status" value="1"/>
</dbReference>
<gene>
    <name evidence="1" type="primary">folD</name>
    <name type="ordered locus">CGSHiGG_06985</name>
</gene>
<sequence>MAAKIISGTELSKQIKANLADKITHYIEQGKRVPGLAVILVGADPASQIYVGNKRKSCEEVGILSKSYDLPETTTQNELLAIIDQLNADKNIDGILVQLPLPKQINAEAIIEHIDPKKDVDGFHPYNVGRLCQRIPTLRACTPYGVMKLLETTGIDLHGKHAVIVGASNIVGRPMSLELLLAGATVTVTHRFTKNLENHVRQADILVVAVGKPNLISGDWIKESAVVIDVGINRVDGKLVGDIEFDKAAEKAAYITPVPGGVGPMTVAMLMSNTLYAYEHNK</sequence>
<accession>A5UHL4</accession>
<organism>
    <name type="scientific">Haemophilus influenzae (strain PittGG)</name>
    <dbReference type="NCBI Taxonomy" id="374931"/>
    <lineage>
        <taxon>Bacteria</taxon>
        <taxon>Pseudomonadati</taxon>
        <taxon>Pseudomonadota</taxon>
        <taxon>Gammaproteobacteria</taxon>
        <taxon>Pasteurellales</taxon>
        <taxon>Pasteurellaceae</taxon>
        <taxon>Haemophilus</taxon>
    </lineage>
</organism>
<name>FOLD_HAEIG</name>